<evidence type="ECO:0000255" key="1">
    <source>
        <dbReference type="HAMAP-Rule" id="MF_01625"/>
    </source>
</evidence>
<organism>
    <name type="scientific">Escherichia coli O6:K15:H31 (strain 536 / UPEC)</name>
    <dbReference type="NCBI Taxonomy" id="362663"/>
    <lineage>
        <taxon>Bacteria</taxon>
        <taxon>Pseudomonadati</taxon>
        <taxon>Pseudomonadota</taxon>
        <taxon>Gammaproteobacteria</taxon>
        <taxon>Enterobacterales</taxon>
        <taxon>Enterobacteriaceae</taxon>
        <taxon>Escherichia</taxon>
    </lineage>
</organism>
<protein>
    <recommendedName>
        <fullName evidence="1">Regulatory ATPase RavA</fullName>
        <ecNumber evidence="1">3.6.1.-</ecNumber>
    </recommendedName>
    <alternativeName>
        <fullName evidence="1">Regulatory ATPase variant A</fullName>
    </alternativeName>
</protein>
<accession>Q0TAW3</accession>
<reference key="1">
    <citation type="journal article" date="2006" name="Mol. Microbiol.">
        <title>Role of pathogenicity island-associated integrases in the genome plasticity of uropathogenic Escherichia coli strain 536.</title>
        <authorList>
            <person name="Hochhut B."/>
            <person name="Wilde C."/>
            <person name="Balling G."/>
            <person name="Middendorf B."/>
            <person name="Dobrindt U."/>
            <person name="Brzuszkiewicz E."/>
            <person name="Gottschalk G."/>
            <person name="Carniel E."/>
            <person name="Hacker J."/>
        </authorList>
    </citation>
    <scope>NUCLEOTIDE SEQUENCE [LARGE SCALE GENOMIC DNA]</scope>
    <source>
        <strain>536 / UPEC</strain>
    </source>
</reference>
<feature type="chain" id="PRO_0000292351" description="Regulatory ATPase RavA">
    <location>
        <begin position="1"/>
        <end position="498"/>
    </location>
</feature>
<feature type="binding site" evidence="1">
    <location>
        <position position="23"/>
    </location>
    <ligand>
        <name>ADP</name>
        <dbReference type="ChEBI" id="CHEBI:456216"/>
    </ligand>
</feature>
<feature type="binding site" evidence="1">
    <location>
        <position position="49"/>
    </location>
    <ligand>
        <name>ADP</name>
        <dbReference type="ChEBI" id="CHEBI:456216"/>
    </ligand>
</feature>
<feature type="binding site" evidence="1">
    <location>
        <position position="50"/>
    </location>
    <ligand>
        <name>ADP</name>
        <dbReference type="ChEBI" id="CHEBI:456216"/>
    </ligand>
</feature>
<feature type="binding site" evidence="1">
    <location>
        <position position="51"/>
    </location>
    <ligand>
        <name>ADP</name>
        <dbReference type="ChEBI" id="CHEBI:456216"/>
    </ligand>
</feature>
<feature type="binding site" evidence="1">
    <location>
        <position position="52"/>
    </location>
    <ligand>
        <name>ADP</name>
        <dbReference type="ChEBI" id="CHEBI:456216"/>
    </ligand>
</feature>
<feature type="binding site" evidence="1">
    <location>
        <position position="53"/>
    </location>
    <ligand>
        <name>ADP</name>
        <dbReference type="ChEBI" id="CHEBI:456216"/>
    </ligand>
</feature>
<feature type="binding site" evidence="1">
    <location>
        <position position="54"/>
    </location>
    <ligand>
        <name>ADP</name>
        <dbReference type="ChEBI" id="CHEBI:456216"/>
    </ligand>
</feature>
<feature type="binding site" evidence="1">
    <location>
        <position position="196"/>
    </location>
    <ligand>
        <name>ADP</name>
        <dbReference type="ChEBI" id="CHEBI:456216"/>
    </ligand>
</feature>
<name>RAVA_ECOL5</name>
<keyword id="KW-0067">ATP-binding</keyword>
<keyword id="KW-0143">Chaperone</keyword>
<keyword id="KW-0963">Cytoplasm</keyword>
<keyword id="KW-0378">Hydrolase</keyword>
<keyword id="KW-0547">Nucleotide-binding</keyword>
<comment type="function">
    <text evidence="1">Component of the RavA-ViaA chaperone complex, which may act on the membrane to optimize the function of some of the respiratory chains. RavA functions as an ATPase.</text>
</comment>
<comment type="catalytic activity">
    <reaction evidence="1">
        <text>ATP + H2O = ADP + phosphate + H(+)</text>
        <dbReference type="Rhea" id="RHEA:13065"/>
        <dbReference type="ChEBI" id="CHEBI:15377"/>
        <dbReference type="ChEBI" id="CHEBI:15378"/>
        <dbReference type="ChEBI" id="CHEBI:30616"/>
        <dbReference type="ChEBI" id="CHEBI:43474"/>
        <dbReference type="ChEBI" id="CHEBI:456216"/>
    </reaction>
</comment>
<comment type="activity regulation">
    <text evidence="1">ATPase activity is stimulated by ViaA.</text>
</comment>
<comment type="subunit">
    <text evidence="1">Homohexamer. Interacts with ViaA.</text>
</comment>
<comment type="subcellular location">
    <subcellularLocation>
        <location evidence="1">Cytoplasm</location>
    </subcellularLocation>
</comment>
<comment type="similarity">
    <text evidence="1">Belongs to the RavA family.</text>
</comment>
<dbReference type="EC" id="3.6.1.-" evidence="1"/>
<dbReference type="EMBL" id="CP000247">
    <property type="protein sequence ID" value="ABG71916.1"/>
    <property type="molecule type" value="Genomic_DNA"/>
</dbReference>
<dbReference type="RefSeq" id="WP_001297967.1">
    <property type="nucleotide sequence ID" value="NC_008253.1"/>
</dbReference>
<dbReference type="SMR" id="Q0TAW3"/>
<dbReference type="KEGG" id="ecp:ECP_3945"/>
<dbReference type="HOGENOM" id="CLU_018678_1_0_6"/>
<dbReference type="Proteomes" id="UP000009182">
    <property type="component" value="Chromosome"/>
</dbReference>
<dbReference type="GO" id="GO:0005737">
    <property type="term" value="C:cytoplasm"/>
    <property type="evidence" value="ECO:0007669"/>
    <property type="project" value="UniProtKB-SubCell"/>
</dbReference>
<dbReference type="GO" id="GO:0005524">
    <property type="term" value="F:ATP binding"/>
    <property type="evidence" value="ECO:0007669"/>
    <property type="project" value="UniProtKB-KW"/>
</dbReference>
<dbReference type="GO" id="GO:0016887">
    <property type="term" value="F:ATP hydrolysis activity"/>
    <property type="evidence" value="ECO:0007669"/>
    <property type="project" value="UniProtKB-UniRule"/>
</dbReference>
<dbReference type="CDD" id="cd00009">
    <property type="entry name" value="AAA"/>
    <property type="match status" value="1"/>
</dbReference>
<dbReference type="FunFam" id="3.40.50.300:FF:000410">
    <property type="entry name" value="ATPase RavA"/>
    <property type="match status" value="1"/>
</dbReference>
<dbReference type="Gene3D" id="1.20.58.1510">
    <property type="match status" value="1"/>
</dbReference>
<dbReference type="Gene3D" id="2.40.128.430">
    <property type="match status" value="1"/>
</dbReference>
<dbReference type="Gene3D" id="3.40.50.300">
    <property type="entry name" value="P-loop containing nucleotide triphosphate hydrolases"/>
    <property type="match status" value="1"/>
</dbReference>
<dbReference type="HAMAP" id="MF_01625">
    <property type="entry name" value="ATPase_RavA"/>
    <property type="match status" value="1"/>
</dbReference>
<dbReference type="InterPro" id="IPR003593">
    <property type="entry name" value="AAA+_ATPase"/>
</dbReference>
<dbReference type="InterPro" id="IPR023671">
    <property type="entry name" value="ATPase_RavA"/>
</dbReference>
<dbReference type="InterPro" id="IPR022547">
    <property type="entry name" value="ATPase_RavA_C"/>
</dbReference>
<dbReference type="InterPro" id="IPR045427">
    <property type="entry name" value="MoxR"/>
</dbReference>
<dbReference type="InterPro" id="IPR027417">
    <property type="entry name" value="P-loop_NTPase"/>
</dbReference>
<dbReference type="InterPro" id="IPR041538">
    <property type="entry name" value="RavA-like_AAA_lid"/>
</dbReference>
<dbReference type="InterPro" id="IPR050513">
    <property type="entry name" value="RavA_ATPases"/>
</dbReference>
<dbReference type="InterPro" id="IPR046898">
    <property type="entry name" value="RavA_LARA_dom"/>
</dbReference>
<dbReference type="InterPro" id="IPR046932">
    <property type="entry name" value="RavA_LARA_sf"/>
</dbReference>
<dbReference type="NCBIfam" id="NF010054">
    <property type="entry name" value="PRK13531.1"/>
    <property type="match status" value="1"/>
</dbReference>
<dbReference type="PANTHER" id="PTHR32204">
    <property type="entry name" value="ATPASE RAVA"/>
    <property type="match status" value="1"/>
</dbReference>
<dbReference type="PANTHER" id="PTHR32204:SF0">
    <property type="entry name" value="ATPASE RAVA"/>
    <property type="match status" value="1"/>
</dbReference>
<dbReference type="Pfam" id="PF17868">
    <property type="entry name" value="AAA_lid_8"/>
    <property type="match status" value="1"/>
</dbReference>
<dbReference type="Pfam" id="PF12592">
    <property type="entry name" value="ATPase_RavA_C"/>
    <property type="match status" value="1"/>
</dbReference>
<dbReference type="Pfam" id="PF20030">
    <property type="entry name" value="bpMoxR"/>
    <property type="match status" value="1"/>
</dbReference>
<dbReference type="Pfam" id="PF20265">
    <property type="entry name" value="LARA_dom"/>
    <property type="match status" value="1"/>
</dbReference>
<dbReference type="SMART" id="SM00382">
    <property type="entry name" value="AAA"/>
    <property type="match status" value="1"/>
</dbReference>
<dbReference type="SUPFAM" id="SSF52540">
    <property type="entry name" value="P-loop containing nucleoside triphosphate hydrolases"/>
    <property type="match status" value="1"/>
</dbReference>
<proteinExistence type="inferred from homology"/>
<sequence>MAHPHLLAERISRLSSSLEKGLYERSHAIRLCLLAALSGESVFLLGPPGIAKSLIARRLKFAFQNARAFEYLMTRFSTPEEVFGPLSIQALKDEGRYERLTSGYLPEAEIVFLDEIWKAGPAILNTLLTAINERQFRNGALVEKIPMRLLVAASNELPEADSSLEALYDRMLIRLWLDKVQDKANFRSMLTSQQDENDNPVPASLQITDEEYERWQKEIGEITLPDHVFELIFMLRQQLDKLPDAPYVSDRRWKKAIRLLQASAFFSGRSAVAPVDLILLKDCLWYDAQSLNLIQQQIDVLMTGHAWQQQGMLTRLGAIVQRHLQLQQQQSDKTALTVIRLGGIFSRRQQYQLPVNVTASTLTLLLQKPLKLHDMEVVHISFERSALEQWLSKGGEIRGKLNGIGFAQKLNLEVDSAQHLVVRDVSLQGSTLALPGSSAEGLPSEIKQQLEELESDWRKQHALFSEQQKCLFIPGDWLGRIEASLQDVGAQIRQAQQC</sequence>
<gene>
    <name evidence="1" type="primary">ravA</name>
    <name type="ordered locus">ECP_3945</name>
</gene>